<reference key="1">
    <citation type="journal article" date="2001" name="Can. J. Vet. Res.">
        <title>Molecular cloning and characterization of beluga whale (Delphinapterus leucas) interleukin-1beta and tumor necrosis factor-alpha.</title>
        <authorList>
            <person name="Denis F."/>
            <person name="Archambault D."/>
        </authorList>
    </citation>
    <scope>NUCLEOTIDE SEQUENCE [MRNA]</scope>
</reference>
<dbReference type="EMBL" id="AF320322">
    <property type="protein sequence ID" value="AAL56945.1"/>
    <property type="molecule type" value="mRNA"/>
</dbReference>
<dbReference type="RefSeq" id="XP_022454935.1">
    <property type="nucleotide sequence ID" value="XM_022599227.1"/>
</dbReference>
<dbReference type="SMR" id="Q8WNR2"/>
<dbReference type="FunCoup" id="Q8WNR2">
    <property type="interactions" value="687"/>
</dbReference>
<dbReference type="STRING" id="9749.Q8WNR2"/>
<dbReference type="GeneID" id="111187492"/>
<dbReference type="InParanoid" id="Q8WNR2"/>
<dbReference type="Proteomes" id="UP000248483">
    <property type="component" value="Unplaced"/>
</dbReference>
<dbReference type="GO" id="GO:0005829">
    <property type="term" value="C:cytosol"/>
    <property type="evidence" value="ECO:0007669"/>
    <property type="project" value="UniProtKB-SubCell"/>
</dbReference>
<dbReference type="GO" id="GO:0005615">
    <property type="term" value="C:extracellular space"/>
    <property type="evidence" value="ECO:0007669"/>
    <property type="project" value="UniProtKB-KW"/>
</dbReference>
<dbReference type="GO" id="GO:0005764">
    <property type="term" value="C:lysosome"/>
    <property type="evidence" value="ECO:0007669"/>
    <property type="project" value="UniProtKB-SubCell"/>
</dbReference>
<dbReference type="GO" id="GO:0005125">
    <property type="term" value="F:cytokine activity"/>
    <property type="evidence" value="ECO:0007669"/>
    <property type="project" value="UniProtKB-KW"/>
</dbReference>
<dbReference type="GO" id="GO:0005178">
    <property type="term" value="F:integrin binding"/>
    <property type="evidence" value="ECO:0000250"/>
    <property type="project" value="UniProtKB"/>
</dbReference>
<dbReference type="GO" id="GO:0005149">
    <property type="term" value="F:interleukin-1 receptor binding"/>
    <property type="evidence" value="ECO:0007669"/>
    <property type="project" value="InterPro"/>
</dbReference>
<dbReference type="GO" id="GO:0019904">
    <property type="term" value="F:protein domain specific binding"/>
    <property type="evidence" value="ECO:0007669"/>
    <property type="project" value="Ensembl"/>
</dbReference>
<dbReference type="GO" id="GO:0071222">
    <property type="term" value="P:cellular response to lipopolysaccharide"/>
    <property type="evidence" value="ECO:0007669"/>
    <property type="project" value="TreeGrafter"/>
</dbReference>
<dbReference type="GO" id="GO:0071260">
    <property type="term" value="P:cellular response to mechanical stimulus"/>
    <property type="evidence" value="ECO:0007669"/>
    <property type="project" value="Ensembl"/>
</dbReference>
<dbReference type="GO" id="GO:0071466">
    <property type="term" value="P:cellular response to xenobiotic stimulus"/>
    <property type="evidence" value="ECO:0007669"/>
    <property type="project" value="Ensembl"/>
</dbReference>
<dbReference type="GO" id="GO:0050830">
    <property type="term" value="P:defense response to Gram-positive bacterium"/>
    <property type="evidence" value="ECO:0007669"/>
    <property type="project" value="Ensembl"/>
</dbReference>
<dbReference type="GO" id="GO:0001660">
    <property type="term" value="P:fever generation"/>
    <property type="evidence" value="ECO:0007669"/>
    <property type="project" value="UniProtKB-KW"/>
</dbReference>
<dbReference type="GO" id="GO:0030213">
    <property type="term" value="P:hyaluronan biosynthetic process"/>
    <property type="evidence" value="ECO:0007669"/>
    <property type="project" value="Ensembl"/>
</dbReference>
<dbReference type="GO" id="GO:0006955">
    <property type="term" value="P:immune response"/>
    <property type="evidence" value="ECO:0007669"/>
    <property type="project" value="InterPro"/>
</dbReference>
<dbReference type="GO" id="GO:0070498">
    <property type="term" value="P:interleukin-1-mediated signaling pathway"/>
    <property type="evidence" value="ECO:0007669"/>
    <property type="project" value="Ensembl"/>
</dbReference>
<dbReference type="GO" id="GO:0070487">
    <property type="term" value="P:monocyte aggregation"/>
    <property type="evidence" value="ECO:0007669"/>
    <property type="project" value="Ensembl"/>
</dbReference>
<dbReference type="GO" id="GO:0008285">
    <property type="term" value="P:negative regulation of cell population proliferation"/>
    <property type="evidence" value="ECO:0007669"/>
    <property type="project" value="Ensembl"/>
</dbReference>
<dbReference type="GO" id="GO:2001240">
    <property type="term" value="P:negative regulation of extrinsic apoptotic signaling pathway in absence of ligand"/>
    <property type="evidence" value="ECO:0007669"/>
    <property type="project" value="Ensembl"/>
</dbReference>
<dbReference type="GO" id="GO:1903597">
    <property type="term" value="P:negative regulation of gap junction assembly"/>
    <property type="evidence" value="ECO:0007669"/>
    <property type="project" value="Ensembl"/>
</dbReference>
<dbReference type="GO" id="GO:0050995">
    <property type="term" value="P:negative regulation of lipid catabolic process"/>
    <property type="evidence" value="ECO:0007669"/>
    <property type="project" value="Ensembl"/>
</dbReference>
<dbReference type="GO" id="GO:0045766">
    <property type="term" value="P:positive regulation of angiogenesis"/>
    <property type="evidence" value="ECO:0007669"/>
    <property type="project" value="Ensembl"/>
</dbReference>
<dbReference type="GO" id="GO:0043123">
    <property type="term" value="P:positive regulation of canonical NF-kappaB signal transduction"/>
    <property type="evidence" value="ECO:0007669"/>
    <property type="project" value="Ensembl"/>
</dbReference>
<dbReference type="GO" id="GO:0051781">
    <property type="term" value="P:positive regulation of cell division"/>
    <property type="evidence" value="ECO:0007669"/>
    <property type="project" value="UniProtKB-KW"/>
</dbReference>
<dbReference type="GO" id="GO:0030335">
    <property type="term" value="P:positive regulation of cell migration"/>
    <property type="evidence" value="ECO:0007669"/>
    <property type="project" value="Ensembl"/>
</dbReference>
<dbReference type="GO" id="GO:0045917">
    <property type="term" value="P:positive regulation of complement activation"/>
    <property type="evidence" value="ECO:0007669"/>
    <property type="project" value="Ensembl"/>
</dbReference>
<dbReference type="GO" id="GO:0045893">
    <property type="term" value="P:positive regulation of DNA-templated transcription"/>
    <property type="evidence" value="ECO:0007669"/>
    <property type="project" value="Ensembl"/>
</dbReference>
<dbReference type="GO" id="GO:0010718">
    <property type="term" value="P:positive regulation of epithelial to mesenchymal transition"/>
    <property type="evidence" value="ECO:0007669"/>
    <property type="project" value="Ensembl"/>
</dbReference>
<dbReference type="GO" id="GO:0070374">
    <property type="term" value="P:positive regulation of ERK1 and ERK2 cascade"/>
    <property type="evidence" value="ECO:0007669"/>
    <property type="project" value="Ensembl"/>
</dbReference>
<dbReference type="GO" id="GO:0060252">
    <property type="term" value="P:positive regulation of glial cell proliferation"/>
    <property type="evidence" value="ECO:0007669"/>
    <property type="project" value="Ensembl"/>
</dbReference>
<dbReference type="GO" id="GO:0032725">
    <property type="term" value="P:positive regulation of granulocyte macrophage colony-stimulating factor production"/>
    <property type="evidence" value="ECO:0007669"/>
    <property type="project" value="Ensembl"/>
</dbReference>
<dbReference type="GO" id="GO:0034116">
    <property type="term" value="P:positive regulation of heterotypic cell-cell adhesion"/>
    <property type="evidence" value="ECO:0007669"/>
    <property type="project" value="Ensembl"/>
</dbReference>
<dbReference type="GO" id="GO:0033092">
    <property type="term" value="P:positive regulation of immature T cell proliferation in thymus"/>
    <property type="evidence" value="ECO:0007669"/>
    <property type="project" value="TreeGrafter"/>
</dbReference>
<dbReference type="GO" id="GO:0050729">
    <property type="term" value="P:positive regulation of inflammatory response"/>
    <property type="evidence" value="ECO:0007669"/>
    <property type="project" value="Ensembl"/>
</dbReference>
<dbReference type="GO" id="GO:0032743">
    <property type="term" value="P:positive regulation of interleukin-2 production"/>
    <property type="evidence" value="ECO:0007669"/>
    <property type="project" value="Ensembl"/>
</dbReference>
<dbReference type="GO" id="GO:0032755">
    <property type="term" value="P:positive regulation of interleukin-6 production"/>
    <property type="evidence" value="ECO:0007669"/>
    <property type="project" value="Ensembl"/>
</dbReference>
<dbReference type="GO" id="GO:0032757">
    <property type="term" value="P:positive regulation of interleukin-8 production"/>
    <property type="evidence" value="ECO:0007669"/>
    <property type="project" value="Ensembl"/>
</dbReference>
<dbReference type="GO" id="GO:0010744">
    <property type="term" value="P:positive regulation of macrophage derived foam cell differentiation"/>
    <property type="evidence" value="ECO:0007669"/>
    <property type="project" value="Ensembl"/>
</dbReference>
<dbReference type="GO" id="GO:0051044">
    <property type="term" value="P:positive regulation of membrane protein ectodomain proteolysis"/>
    <property type="evidence" value="ECO:0007669"/>
    <property type="project" value="Ensembl"/>
</dbReference>
<dbReference type="GO" id="GO:0045840">
    <property type="term" value="P:positive regulation of mitotic nuclear division"/>
    <property type="evidence" value="ECO:0007669"/>
    <property type="project" value="Ensembl"/>
</dbReference>
<dbReference type="GO" id="GO:0071639">
    <property type="term" value="P:positive regulation of monocyte chemotactic protein-1 production"/>
    <property type="evidence" value="ECO:0007669"/>
    <property type="project" value="Ensembl"/>
</dbReference>
<dbReference type="GO" id="GO:0045429">
    <property type="term" value="P:positive regulation of nitric oxide biosynthetic process"/>
    <property type="evidence" value="ECO:0007669"/>
    <property type="project" value="Ensembl"/>
</dbReference>
<dbReference type="GO" id="GO:1901224">
    <property type="term" value="P:positive regulation of non-canonical NF-kappaB signal transduction"/>
    <property type="evidence" value="ECO:0007669"/>
    <property type="project" value="Ensembl"/>
</dbReference>
<dbReference type="GO" id="GO:0051897">
    <property type="term" value="P:positive regulation of phosphatidylinositol 3-kinase/protein kinase B signal transduction"/>
    <property type="evidence" value="ECO:0007669"/>
    <property type="project" value="Ensembl"/>
</dbReference>
<dbReference type="GO" id="GO:0010641">
    <property type="term" value="P:positive regulation of platelet-derived growth factor receptor signaling pathway"/>
    <property type="evidence" value="ECO:0007669"/>
    <property type="project" value="Ensembl"/>
</dbReference>
<dbReference type="GO" id="GO:0031394">
    <property type="term" value="P:positive regulation of prostaglandin biosynthetic process"/>
    <property type="evidence" value="ECO:0007669"/>
    <property type="project" value="Ensembl"/>
</dbReference>
<dbReference type="GO" id="GO:2000556">
    <property type="term" value="P:positive regulation of T-helper 1 cell cytokine production"/>
    <property type="evidence" value="ECO:0000250"/>
    <property type="project" value="UniProtKB"/>
</dbReference>
<dbReference type="GO" id="GO:1905075">
    <property type="term" value="P:positive regulation of tight junction disassembly"/>
    <property type="evidence" value="ECO:0007669"/>
    <property type="project" value="Ensembl"/>
</dbReference>
<dbReference type="GO" id="GO:0032729">
    <property type="term" value="P:positive regulation of type II interferon production"/>
    <property type="evidence" value="ECO:0000250"/>
    <property type="project" value="UniProtKB"/>
</dbReference>
<dbReference type="GO" id="GO:0010575">
    <property type="term" value="P:positive regulation of vascular endothelial growth factor production"/>
    <property type="evidence" value="ECO:0007669"/>
    <property type="project" value="Ensembl"/>
</dbReference>
<dbReference type="GO" id="GO:1903140">
    <property type="term" value="P:regulation of establishment of endothelial barrier"/>
    <property type="evidence" value="ECO:0007669"/>
    <property type="project" value="Ensembl"/>
</dbReference>
<dbReference type="GO" id="GO:0050796">
    <property type="term" value="P:regulation of insulin secretion"/>
    <property type="evidence" value="ECO:0007669"/>
    <property type="project" value="Ensembl"/>
</dbReference>
<dbReference type="GO" id="GO:0010573">
    <property type="term" value="P:vascular endothelial growth factor production"/>
    <property type="evidence" value="ECO:0000250"/>
    <property type="project" value="UniProtKB"/>
</dbReference>
<dbReference type="CDD" id="cd23296">
    <property type="entry name" value="beta-trefoil_IL1B"/>
    <property type="match status" value="1"/>
</dbReference>
<dbReference type="FunFam" id="2.80.10.50:FF:000027">
    <property type="entry name" value="Interleukin-1 beta"/>
    <property type="match status" value="1"/>
</dbReference>
<dbReference type="Gene3D" id="2.80.10.50">
    <property type="match status" value="1"/>
</dbReference>
<dbReference type="InterPro" id="IPR020877">
    <property type="entry name" value="IL-1_CS"/>
</dbReference>
<dbReference type="InterPro" id="IPR000975">
    <property type="entry name" value="IL-1_fam"/>
</dbReference>
<dbReference type="InterPro" id="IPR003502">
    <property type="entry name" value="IL-1_propep"/>
</dbReference>
<dbReference type="InterPro" id="IPR008996">
    <property type="entry name" value="IL1/FGF"/>
</dbReference>
<dbReference type="PANTHER" id="PTHR10078:SF30">
    <property type="entry name" value="INTERLEUKIN-1 BETA"/>
    <property type="match status" value="1"/>
</dbReference>
<dbReference type="PANTHER" id="PTHR10078">
    <property type="entry name" value="INTERLEUKIN-1 FAMILY MEMBER"/>
    <property type="match status" value="1"/>
</dbReference>
<dbReference type="Pfam" id="PF00340">
    <property type="entry name" value="IL1"/>
    <property type="match status" value="1"/>
</dbReference>
<dbReference type="Pfam" id="PF02394">
    <property type="entry name" value="IL1_propep"/>
    <property type="match status" value="1"/>
</dbReference>
<dbReference type="PRINTS" id="PR00262">
    <property type="entry name" value="IL1HBGF"/>
</dbReference>
<dbReference type="PRINTS" id="PR00264">
    <property type="entry name" value="INTERLEUKIN1"/>
</dbReference>
<dbReference type="PRINTS" id="PR01359">
    <property type="entry name" value="INTRLEUKIN1B"/>
</dbReference>
<dbReference type="PRINTS" id="PR01357">
    <property type="entry name" value="INTRLEUKN1AB"/>
</dbReference>
<dbReference type="SMART" id="SM00125">
    <property type="entry name" value="IL1"/>
    <property type="match status" value="1"/>
</dbReference>
<dbReference type="SUPFAM" id="SSF50353">
    <property type="entry name" value="Cytokine"/>
    <property type="match status" value="1"/>
</dbReference>
<dbReference type="PROSITE" id="PS00253">
    <property type="entry name" value="INTERLEUKIN_1"/>
    <property type="match status" value="1"/>
</dbReference>
<accession>Q8WNR2</accession>
<gene>
    <name type="primary">IL1B</name>
</gene>
<sequence>MATVPEPTNEVMAYYSDENDLLFEADGPKQMKCCVQPLDLNSMGDGSIHLQISHQLYNKSLRRVVSVIVAVEKLQKIPCSQTFQDDGLRSIFSLIFEEEPVIFETYDDDLLCDAGVQSLTCKLQDRDQKSLVLASPCVLKALHLLARDVNREVVFCMSFVQGDESNDKIPVALGLKEKNLYLSCVMKGDRPTLQLEEVDPKTYPKWKMEKRFVFNKTEIKNSVEFESALYPNWYISTSQAEEKPIFLGRSKGGHDITDFTMEIISP</sequence>
<comment type="function">
    <text evidence="2">Potent pro-inflammatory cytokine. Initially discovered as the major endogenous pyrogen, induces prostaglandin synthesis, neutrophil influx and activation, T-cell activation and cytokine production, B-cell activation and antibody production, and fibroblast proliferation and collagen production. Promotes Th17 differentiation of T-cells. Synergizes with IL12/interleukin-12 to induce IFNG synthesis from T-helper 1 (Th1) cells. Plays a role in angiogenesis by inducing VEGF production synergistically with TNF and IL6. Involved in transduction of inflammation downstream of pyroptosis: its mature form is specifically released in the extracellular milieu by passing through the gasdermin-D (GSDMD) pore.</text>
</comment>
<comment type="subunit">
    <text evidence="2">Monomer. In its precursor form, weakly interacts with full-length MEFV; the mature cytokine does not interact at all. Interacts with integrins ITGAV:ITGBV and ITGA5:ITGB1; integrin-binding is required for IL1B signaling. Interacts with cargo receptor TMED10; the interaction is direct and is required for the secretion of IL1B mature form. Interacts with HSP90AB1; the interaction facilitates cargo translocation into the ERGIC. Interacts with HSP90B1; the interaction facilitates cargo translocation into the ERGIC.</text>
</comment>
<comment type="subcellular location">
    <subcellularLocation>
        <location evidence="2">Cytoplasm</location>
        <location evidence="2">Cytosol</location>
    </subcellularLocation>
    <subcellularLocation>
        <location evidence="2">Secreted</location>
    </subcellularLocation>
    <subcellularLocation>
        <location evidence="2">Lysosome</location>
    </subcellularLocation>
    <subcellularLocation>
        <location evidence="3">Secreted</location>
        <location evidence="3">Extracellular exosome</location>
    </subcellularLocation>
    <text evidence="2">The precursor is cytosolic. In response to inflammasome-activating signals, such as ATP for NLRP3 inflammasome or bacterial flagellin for NLRC4 inflammasome, cleaved and secreted. Mature form is secreted and released in the extracellular milieu by passing through the gasdermin-D (GSDMD) pore. In contrast, the precursor form is not released, due to the presence of an acidic region that is proteolytically removed by CASP1 during maturation. The secretion is dependent on protein unfolding and facilitated by the cargo receptor TMED10.</text>
</comment>
<comment type="miscellaneous">
    <text evidence="1">IL1B production occurs in 2 steps, each being controlled by different stimuli. First, inflammatory signals, such as LPS, stimulate the synthesis and promote the accumulation of cytosolic stores of pro-IL1B (priming). Then additional signals are required for inflammasome assembly, leading to CASP1 activation, pro-IL1B processing and eventually secretion of the active cytokine. IL1B processing and secretion are temporarily associated.</text>
</comment>
<comment type="similarity">
    <text evidence="4">Belongs to the IL-1 family.</text>
</comment>
<organism>
    <name type="scientific">Delphinapterus leucas</name>
    <name type="common">Beluga whale</name>
    <dbReference type="NCBI Taxonomy" id="9749"/>
    <lineage>
        <taxon>Eukaryota</taxon>
        <taxon>Metazoa</taxon>
        <taxon>Chordata</taxon>
        <taxon>Craniata</taxon>
        <taxon>Vertebrata</taxon>
        <taxon>Euteleostomi</taxon>
        <taxon>Mammalia</taxon>
        <taxon>Eutheria</taxon>
        <taxon>Laurasiatheria</taxon>
        <taxon>Artiodactyla</taxon>
        <taxon>Whippomorpha</taxon>
        <taxon>Cetacea</taxon>
        <taxon>Odontoceti</taxon>
        <taxon>Monodontidae</taxon>
        <taxon>Delphinapterus</taxon>
    </lineage>
</organism>
<keyword id="KW-0202">Cytokine</keyword>
<keyword id="KW-0963">Cytoplasm</keyword>
<keyword id="KW-0395">Inflammatory response</keyword>
<keyword id="KW-0458">Lysosome</keyword>
<keyword id="KW-0497">Mitogen</keyword>
<keyword id="KW-0666">Pyrogen</keyword>
<keyword id="KW-1185">Reference proteome</keyword>
<keyword id="KW-0964">Secreted</keyword>
<proteinExistence type="evidence at transcript level"/>
<name>IL1B_DELLE</name>
<evidence type="ECO:0000250" key="1"/>
<evidence type="ECO:0000250" key="2">
    <source>
        <dbReference type="UniProtKB" id="P01584"/>
    </source>
</evidence>
<evidence type="ECO:0000250" key="3">
    <source>
        <dbReference type="UniProtKB" id="P10749"/>
    </source>
</evidence>
<evidence type="ECO:0000305" key="4"/>
<protein>
    <recommendedName>
        <fullName>Interleukin-1 beta</fullName>
        <shortName>IL-1 beta</shortName>
    </recommendedName>
</protein>
<feature type="propeptide" id="PRO_0000045163" evidence="1">
    <location>
        <begin position="1"/>
        <end position="113"/>
    </location>
</feature>
<feature type="chain" id="PRO_0000045164" description="Interleukin-1 beta">
    <location>
        <begin position="114"/>
        <end position="266"/>
    </location>
</feature>
<feature type="site" description="Important for interaction with integrin" evidence="2">
    <location>
        <position position="168"/>
    </location>
</feature>
<feature type="site" description="Important for interaction with integrin" evidence="2">
    <location>
        <position position="176"/>
    </location>
</feature>
<feature type="site" description="Important for interaction with integrin" evidence="2">
    <location>
        <position position="178"/>
    </location>
</feature>
<feature type="site" description="Important for interaction with integrin" evidence="2">
    <location>
        <position position="187"/>
    </location>
</feature>
<feature type="site" description="Important for interaction with integrin" evidence="2">
    <location>
        <position position="201"/>
    </location>
</feature>